<proteinExistence type="inferred from homology"/>
<name>MTFA_ECO7I</name>
<protein>
    <recommendedName>
        <fullName evidence="1">Mlc titration factor A</fullName>
    </recommendedName>
    <alternativeName>
        <fullName evidence="1">Probable zinc metallopeptidase MtfA</fullName>
        <ecNumber evidence="1">3.4.11.-</ecNumber>
    </alternativeName>
</protein>
<organism>
    <name type="scientific">Escherichia coli O7:K1 (strain IAI39 / ExPEC)</name>
    <dbReference type="NCBI Taxonomy" id="585057"/>
    <lineage>
        <taxon>Bacteria</taxon>
        <taxon>Pseudomonadati</taxon>
        <taxon>Pseudomonadota</taxon>
        <taxon>Gammaproteobacteria</taxon>
        <taxon>Enterobacterales</taxon>
        <taxon>Enterobacteriaceae</taxon>
        <taxon>Escherichia</taxon>
    </lineage>
</organism>
<dbReference type="EC" id="3.4.11.-" evidence="1"/>
<dbReference type="EMBL" id="CU928164">
    <property type="protein sequence ID" value="CAR17217.1"/>
    <property type="molecule type" value="Genomic_DNA"/>
</dbReference>
<dbReference type="RefSeq" id="WP_001311896.1">
    <property type="nucleotide sequence ID" value="NC_011750.1"/>
</dbReference>
<dbReference type="RefSeq" id="YP_002407095.1">
    <property type="nucleotide sequence ID" value="NC_011750.1"/>
</dbReference>
<dbReference type="SMR" id="B7NRA8"/>
<dbReference type="STRING" id="585057.ECIAI39_1082"/>
<dbReference type="MEROPS" id="M90.001"/>
<dbReference type="KEGG" id="ect:ECIAI39_1082"/>
<dbReference type="PATRIC" id="fig|585057.6.peg.1133"/>
<dbReference type="HOGENOM" id="CLU_063037_2_0_6"/>
<dbReference type="Proteomes" id="UP000000749">
    <property type="component" value="Chromosome"/>
</dbReference>
<dbReference type="GO" id="GO:0005829">
    <property type="term" value="C:cytosol"/>
    <property type="evidence" value="ECO:0007669"/>
    <property type="project" value="TreeGrafter"/>
</dbReference>
<dbReference type="GO" id="GO:0004177">
    <property type="term" value="F:aminopeptidase activity"/>
    <property type="evidence" value="ECO:0007669"/>
    <property type="project" value="UniProtKB-UniRule"/>
</dbReference>
<dbReference type="GO" id="GO:0008237">
    <property type="term" value="F:metallopeptidase activity"/>
    <property type="evidence" value="ECO:0007669"/>
    <property type="project" value="UniProtKB-UniRule"/>
</dbReference>
<dbReference type="GO" id="GO:0008270">
    <property type="term" value="F:zinc ion binding"/>
    <property type="evidence" value="ECO:0007669"/>
    <property type="project" value="UniProtKB-UniRule"/>
</dbReference>
<dbReference type="GO" id="GO:0006508">
    <property type="term" value="P:proteolysis"/>
    <property type="evidence" value="ECO:0007669"/>
    <property type="project" value="UniProtKB-KW"/>
</dbReference>
<dbReference type="CDD" id="cd20169">
    <property type="entry name" value="Peptidase_M90_mtfA"/>
    <property type="match status" value="1"/>
</dbReference>
<dbReference type="FunFam" id="1.10.472.150:FF:000001">
    <property type="entry name" value="Protein MtfA"/>
    <property type="match status" value="1"/>
</dbReference>
<dbReference type="FunFam" id="3.40.390.10:FF:000012">
    <property type="entry name" value="Protein MtfA"/>
    <property type="match status" value="1"/>
</dbReference>
<dbReference type="Gene3D" id="3.40.390.10">
    <property type="entry name" value="Collagenase (Catalytic Domain)"/>
    <property type="match status" value="1"/>
</dbReference>
<dbReference type="Gene3D" id="1.10.472.150">
    <property type="entry name" value="Glucose-regulated metallo-peptidase M90, N-terminal domain"/>
    <property type="match status" value="1"/>
</dbReference>
<dbReference type="HAMAP" id="MF_01593">
    <property type="entry name" value="MtfA"/>
    <property type="match status" value="1"/>
</dbReference>
<dbReference type="InterPro" id="IPR024079">
    <property type="entry name" value="MetalloPept_cat_dom_sf"/>
</dbReference>
<dbReference type="InterPro" id="IPR057256">
    <property type="entry name" value="MtfA_enterob"/>
</dbReference>
<dbReference type="InterPro" id="IPR010384">
    <property type="entry name" value="MtfA_fam"/>
</dbReference>
<dbReference type="InterPro" id="IPR042252">
    <property type="entry name" value="MtfA_N"/>
</dbReference>
<dbReference type="NCBIfam" id="NF011939">
    <property type="entry name" value="PRK15410.1"/>
    <property type="match status" value="1"/>
</dbReference>
<dbReference type="PANTHER" id="PTHR30164">
    <property type="entry name" value="MTFA PEPTIDASE"/>
    <property type="match status" value="1"/>
</dbReference>
<dbReference type="PANTHER" id="PTHR30164:SF2">
    <property type="entry name" value="PROTEIN MTFA"/>
    <property type="match status" value="1"/>
</dbReference>
<dbReference type="Pfam" id="PF06167">
    <property type="entry name" value="Peptidase_M90"/>
    <property type="match status" value="1"/>
</dbReference>
<dbReference type="SUPFAM" id="SSF55486">
    <property type="entry name" value="Metalloproteases ('zincins'), catalytic domain"/>
    <property type="match status" value="1"/>
</dbReference>
<gene>
    <name evidence="1" type="primary">mtfA</name>
    <name type="ordered locus">ECIAI39_1082</name>
</gene>
<accession>B7NRA8</accession>
<sequence length="265" mass="30252">MIKWPWKVQESAHQTALPWQEALSIPLLTCLTEQEQSKLVALAERFLQQKRLVPLQGFELNSLRSCRIALLFCLPVLELGLEWLDGFHEILIYPAPFVVDDEWEDDIGLVHNQRIVQSGQSWQQGPIVLNWLDIQDSFDASGFNLIIHEVAHKLDTRNGDRASGVPFISLREVAGWEHDLHAAMNNIQEEIELVGENAASIDAYAASDPAECFAVLSEYFFSAPELFAPRFPSLWQRFCQFYQQDPLQRLHHANDTDSFSATNVH</sequence>
<feature type="chain" id="PRO_1000147834" description="Mlc titration factor A">
    <location>
        <begin position="1"/>
        <end position="265"/>
    </location>
</feature>
<feature type="binding site" evidence="1">
    <location>
        <position position="111"/>
    </location>
    <ligand>
        <name>Zn(2+)</name>
        <dbReference type="ChEBI" id="CHEBI:29105"/>
    </ligand>
</feature>
<feature type="binding site" evidence="1">
    <location>
        <position position="148"/>
    </location>
    <ligand>
        <name>Zn(2+)</name>
        <dbReference type="ChEBI" id="CHEBI:29105"/>
    </ligand>
</feature>
<feature type="binding site" evidence="1">
    <location>
        <position position="152"/>
    </location>
    <ligand>
        <name>Zn(2+)</name>
        <dbReference type="ChEBI" id="CHEBI:29105"/>
    </ligand>
</feature>
<feature type="binding site" evidence="1">
    <location>
        <position position="211"/>
    </location>
    <ligand>
        <name>Zn(2+)</name>
        <dbReference type="ChEBI" id="CHEBI:29105"/>
    </ligand>
</feature>
<comment type="function">
    <text evidence="1">Involved in the modulation of the activity of the glucose-phosphotransferase system (glucose-PTS). Interacts with the transcriptional repressor Mlc, preventing its interaction with DNA and leading to the modulation of expression of genes regulated by Mlc, including ptsG, which encodes the PTS system glucose-specific EIICB component.</text>
</comment>
<comment type="function">
    <text evidence="1">Shows zinc-dependent metallopeptidase activity.</text>
</comment>
<comment type="cofactor">
    <cofactor evidence="1">
        <name>Zn(2+)</name>
        <dbReference type="ChEBI" id="CHEBI:29105"/>
    </cofactor>
    <text evidence="1">Binds 1 zinc ion per subunit.</text>
</comment>
<comment type="subunit">
    <text evidence="1">Interacts with Mlc.</text>
</comment>
<comment type="subcellular location">
    <subcellularLocation>
        <location evidence="1">Cytoplasm</location>
    </subcellularLocation>
</comment>
<comment type="similarity">
    <text evidence="1">Belongs to the MtfA family.</text>
</comment>
<keyword id="KW-0031">Aminopeptidase</keyword>
<keyword id="KW-0963">Cytoplasm</keyword>
<keyword id="KW-0378">Hydrolase</keyword>
<keyword id="KW-0479">Metal-binding</keyword>
<keyword id="KW-0482">Metalloprotease</keyword>
<keyword id="KW-0645">Protease</keyword>
<keyword id="KW-0862">Zinc</keyword>
<reference key="1">
    <citation type="journal article" date="2009" name="PLoS Genet.">
        <title>Organised genome dynamics in the Escherichia coli species results in highly diverse adaptive paths.</title>
        <authorList>
            <person name="Touchon M."/>
            <person name="Hoede C."/>
            <person name="Tenaillon O."/>
            <person name="Barbe V."/>
            <person name="Baeriswyl S."/>
            <person name="Bidet P."/>
            <person name="Bingen E."/>
            <person name="Bonacorsi S."/>
            <person name="Bouchier C."/>
            <person name="Bouvet O."/>
            <person name="Calteau A."/>
            <person name="Chiapello H."/>
            <person name="Clermont O."/>
            <person name="Cruveiller S."/>
            <person name="Danchin A."/>
            <person name="Diard M."/>
            <person name="Dossat C."/>
            <person name="Karoui M.E."/>
            <person name="Frapy E."/>
            <person name="Garry L."/>
            <person name="Ghigo J.M."/>
            <person name="Gilles A.M."/>
            <person name="Johnson J."/>
            <person name="Le Bouguenec C."/>
            <person name="Lescat M."/>
            <person name="Mangenot S."/>
            <person name="Martinez-Jehanne V."/>
            <person name="Matic I."/>
            <person name="Nassif X."/>
            <person name="Oztas S."/>
            <person name="Petit M.A."/>
            <person name="Pichon C."/>
            <person name="Rouy Z."/>
            <person name="Ruf C.S."/>
            <person name="Schneider D."/>
            <person name="Tourret J."/>
            <person name="Vacherie B."/>
            <person name="Vallenet D."/>
            <person name="Medigue C."/>
            <person name="Rocha E.P.C."/>
            <person name="Denamur E."/>
        </authorList>
    </citation>
    <scope>NUCLEOTIDE SEQUENCE [LARGE SCALE GENOMIC DNA]</scope>
    <source>
        <strain>IAI39 / ExPEC</strain>
    </source>
</reference>
<evidence type="ECO:0000255" key="1">
    <source>
        <dbReference type="HAMAP-Rule" id="MF_01593"/>
    </source>
</evidence>